<gene>
    <name type="primary">RSZ23</name>
    <name type="synonym">RSZP23</name>
    <name type="ordered locus">Os02g0610600</name>
    <name type="ordered locus">LOC_Os02g39720</name>
    <name type="ORF">OJ1476_F05.20</name>
</gene>
<organism>
    <name type="scientific">Oryza sativa subsp. japonica</name>
    <name type="common">Rice</name>
    <dbReference type="NCBI Taxonomy" id="39947"/>
    <lineage>
        <taxon>Eukaryota</taxon>
        <taxon>Viridiplantae</taxon>
        <taxon>Streptophyta</taxon>
        <taxon>Embryophyta</taxon>
        <taxon>Tracheophyta</taxon>
        <taxon>Spermatophyta</taxon>
        <taxon>Magnoliopsida</taxon>
        <taxon>Liliopsida</taxon>
        <taxon>Poales</taxon>
        <taxon>Poaceae</taxon>
        <taxon>BOP clade</taxon>
        <taxon>Oryzoideae</taxon>
        <taxon>Oryzeae</taxon>
        <taxon>Oryzinae</taxon>
        <taxon>Oryza</taxon>
        <taxon>Oryza sativa</taxon>
    </lineage>
</organism>
<keyword id="KW-0479">Metal-binding</keyword>
<keyword id="KW-0507">mRNA processing</keyword>
<keyword id="KW-0508">mRNA splicing</keyword>
<keyword id="KW-0539">Nucleus</keyword>
<keyword id="KW-1185">Reference proteome</keyword>
<keyword id="KW-0862">Zinc</keyword>
<keyword id="KW-0863">Zinc-finger</keyword>
<protein>
    <recommendedName>
        <fullName>Serine/arginine-rich splicing factor RSZ23</fullName>
    </recommendedName>
    <alternativeName>
        <fullName>RS-containing zinc finger protein 23</fullName>
        <shortName>Os-RSZ23</shortName>
        <shortName>Os-RSZp23</shortName>
    </alternativeName>
</protein>
<dbReference type="EMBL" id="AP004063">
    <property type="protein sequence ID" value="BAD19227.1"/>
    <property type="molecule type" value="Genomic_DNA"/>
</dbReference>
<dbReference type="EMBL" id="AP008208">
    <property type="protein sequence ID" value="BAF09314.1"/>
    <property type="molecule type" value="Genomic_DNA"/>
</dbReference>
<dbReference type="EMBL" id="AP014958">
    <property type="protein sequence ID" value="BAS79708.1"/>
    <property type="molecule type" value="Genomic_DNA"/>
</dbReference>
<dbReference type="EMBL" id="AK060088">
    <property type="protein sequence ID" value="BAG87313.1"/>
    <property type="molecule type" value="mRNA"/>
</dbReference>
<dbReference type="EMBL" id="AK099572">
    <property type="protein sequence ID" value="BAG94201.1"/>
    <property type="molecule type" value="mRNA"/>
</dbReference>
<dbReference type="EMBL" id="AK104726">
    <property type="protein sequence ID" value="BAG96908.1"/>
    <property type="molecule type" value="mRNA"/>
</dbReference>
<dbReference type="RefSeq" id="XP_015625857.1">
    <property type="nucleotide sequence ID" value="XM_015770371.1"/>
</dbReference>
<dbReference type="SMR" id="Q6K9C3"/>
<dbReference type="FunCoup" id="Q6K9C3">
    <property type="interactions" value="1273"/>
</dbReference>
<dbReference type="STRING" id="39947.Q6K9C3"/>
<dbReference type="iPTMnet" id="Q6K9C3"/>
<dbReference type="PaxDb" id="39947-Q6K9C3"/>
<dbReference type="EnsemblPlants" id="Os02t0610600-01">
    <property type="protein sequence ID" value="Os02t0610600-01"/>
    <property type="gene ID" value="Os02g0610600"/>
</dbReference>
<dbReference type="Gramene" id="Os02t0610600-01">
    <property type="protein sequence ID" value="Os02t0610600-01"/>
    <property type="gene ID" value="Os02g0610600"/>
</dbReference>
<dbReference type="KEGG" id="dosa:Os02g0610600"/>
<dbReference type="eggNOG" id="KOG0107">
    <property type="taxonomic scope" value="Eukaryota"/>
</dbReference>
<dbReference type="HOGENOM" id="CLU_012062_20_1_1"/>
<dbReference type="InParanoid" id="Q6K9C3"/>
<dbReference type="OMA" id="MICNARI"/>
<dbReference type="OrthoDB" id="5970at2759"/>
<dbReference type="Proteomes" id="UP000000763">
    <property type="component" value="Chromosome 2"/>
</dbReference>
<dbReference type="Proteomes" id="UP000059680">
    <property type="component" value="Chromosome 2"/>
</dbReference>
<dbReference type="GO" id="GO:0016607">
    <property type="term" value="C:nuclear speck"/>
    <property type="evidence" value="ECO:0000318"/>
    <property type="project" value="GO_Central"/>
</dbReference>
<dbReference type="GO" id="GO:0003723">
    <property type="term" value="F:RNA binding"/>
    <property type="evidence" value="ECO:0000318"/>
    <property type="project" value="GO_Central"/>
</dbReference>
<dbReference type="GO" id="GO:0008270">
    <property type="term" value="F:zinc ion binding"/>
    <property type="evidence" value="ECO:0007669"/>
    <property type="project" value="UniProtKB-KW"/>
</dbReference>
<dbReference type="GO" id="GO:0045292">
    <property type="term" value="P:mRNA cis splicing, via spliceosome"/>
    <property type="evidence" value="ECO:0000318"/>
    <property type="project" value="GO_Central"/>
</dbReference>
<dbReference type="GO" id="GO:0000398">
    <property type="term" value="P:mRNA splicing, via spliceosome"/>
    <property type="evidence" value="ECO:0000314"/>
    <property type="project" value="UniProtKB"/>
</dbReference>
<dbReference type="CDD" id="cd12373">
    <property type="entry name" value="RRM_SRSF3_like"/>
    <property type="match status" value="1"/>
</dbReference>
<dbReference type="FunFam" id="3.30.70.330:FF:000214">
    <property type="entry name" value="Serine/arginine-rich splicing factor 7"/>
    <property type="match status" value="1"/>
</dbReference>
<dbReference type="FunFam" id="4.10.60.10:FF:000070">
    <property type="entry name" value="Splicing factor, arginine/serine-rich 7"/>
    <property type="match status" value="1"/>
</dbReference>
<dbReference type="Gene3D" id="3.30.70.330">
    <property type="match status" value="1"/>
</dbReference>
<dbReference type="Gene3D" id="4.10.60.10">
    <property type="entry name" value="Zinc finger, CCHC-type"/>
    <property type="match status" value="1"/>
</dbReference>
<dbReference type="InterPro" id="IPR012677">
    <property type="entry name" value="Nucleotide-bd_a/b_plait_sf"/>
</dbReference>
<dbReference type="InterPro" id="IPR035979">
    <property type="entry name" value="RBD_domain_sf"/>
</dbReference>
<dbReference type="InterPro" id="IPR000504">
    <property type="entry name" value="RRM_dom"/>
</dbReference>
<dbReference type="InterPro" id="IPR050907">
    <property type="entry name" value="SRSF"/>
</dbReference>
<dbReference type="InterPro" id="IPR001878">
    <property type="entry name" value="Znf_CCHC"/>
</dbReference>
<dbReference type="InterPro" id="IPR036875">
    <property type="entry name" value="Znf_CCHC_sf"/>
</dbReference>
<dbReference type="PANTHER" id="PTHR23147">
    <property type="entry name" value="SERINE/ARGININE RICH SPLICING FACTOR"/>
    <property type="match status" value="1"/>
</dbReference>
<dbReference type="Pfam" id="PF00076">
    <property type="entry name" value="RRM_1"/>
    <property type="match status" value="1"/>
</dbReference>
<dbReference type="Pfam" id="PF00098">
    <property type="entry name" value="zf-CCHC"/>
    <property type="match status" value="1"/>
</dbReference>
<dbReference type="SMART" id="SM00360">
    <property type="entry name" value="RRM"/>
    <property type="match status" value="1"/>
</dbReference>
<dbReference type="SMART" id="SM00343">
    <property type="entry name" value="ZnF_C2HC"/>
    <property type="match status" value="1"/>
</dbReference>
<dbReference type="SUPFAM" id="SSF57756">
    <property type="entry name" value="Retrovirus zinc finger-like domains"/>
    <property type="match status" value="1"/>
</dbReference>
<dbReference type="SUPFAM" id="SSF54928">
    <property type="entry name" value="RNA-binding domain, RBD"/>
    <property type="match status" value="1"/>
</dbReference>
<dbReference type="PROSITE" id="PS50102">
    <property type="entry name" value="RRM"/>
    <property type="match status" value="1"/>
</dbReference>
<dbReference type="PROSITE" id="PS50158">
    <property type="entry name" value="ZF_CCHC"/>
    <property type="match status" value="1"/>
</dbReference>
<comment type="function">
    <text evidence="6">Involved in pre-mRNA splicing. In protoplast assay, enhances splicing efficiency of WAXY intron 1 and alters the selection of the 5'-splice sites by stimulating site 1 (proximal site).</text>
</comment>
<comment type="subcellular location">
    <subcellularLocation>
        <location evidence="2">Nucleus</location>
    </subcellularLocation>
</comment>
<comment type="tissue specificity">
    <text evidence="6">Expressed in roots, leaves and immature seeds.</text>
</comment>
<comment type="PTM">
    <text evidence="1">Extensively phosphorylated on serine residues in the RS domain.</text>
</comment>
<comment type="similarity">
    <text evidence="7">Belongs to the splicing factor SR family.</text>
</comment>
<feature type="chain" id="PRO_0000416996" description="Serine/arginine-rich splicing factor RSZ23">
    <location>
        <begin position="1"/>
        <end position="200"/>
    </location>
</feature>
<feature type="domain" description="RRM" evidence="4">
    <location>
        <begin position="2"/>
        <end position="71"/>
    </location>
</feature>
<feature type="zinc finger region" description="CCHC-type" evidence="3">
    <location>
        <begin position="86"/>
        <end position="103"/>
    </location>
</feature>
<feature type="region of interest" description="Disordered" evidence="5">
    <location>
        <begin position="105"/>
        <end position="200"/>
    </location>
</feature>
<feature type="compositionally biased region" description="Basic residues" evidence="5">
    <location>
        <begin position="113"/>
        <end position="139"/>
    </location>
</feature>
<name>RZP23_ORYSJ</name>
<evidence type="ECO:0000250" key="1"/>
<evidence type="ECO:0000250" key="2">
    <source>
        <dbReference type="UniProtKB" id="O81126"/>
    </source>
</evidence>
<evidence type="ECO:0000255" key="3">
    <source>
        <dbReference type="PROSITE-ProRule" id="PRU00047"/>
    </source>
</evidence>
<evidence type="ECO:0000255" key="4">
    <source>
        <dbReference type="PROSITE-ProRule" id="PRU00176"/>
    </source>
</evidence>
<evidence type="ECO:0000256" key="5">
    <source>
        <dbReference type="SAM" id="MobiDB-lite"/>
    </source>
</evidence>
<evidence type="ECO:0000269" key="6">
    <source>
    </source>
</evidence>
<evidence type="ECO:0000305" key="7"/>
<reference key="1">
    <citation type="journal article" date="2005" name="Nature">
        <title>The map-based sequence of the rice genome.</title>
        <authorList>
            <consortium name="International rice genome sequencing project (IRGSP)"/>
        </authorList>
    </citation>
    <scope>NUCLEOTIDE SEQUENCE [LARGE SCALE GENOMIC DNA]</scope>
    <source>
        <strain>cv. Nipponbare</strain>
    </source>
</reference>
<reference key="2">
    <citation type="journal article" date="2008" name="Nucleic Acids Res.">
        <title>The rice annotation project database (RAP-DB): 2008 update.</title>
        <authorList>
            <consortium name="The rice annotation project (RAP)"/>
        </authorList>
    </citation>
    <scope>GENOME REANNOTATION</scope>
    <source>
        <strain>cv. Nipponbare</strain>
    </source>
</reference>
<reference key="3">
    <citation type="journal article" date="2013" name="Rice">
        <title>Improvement of the Oryza sativa Nipponbare reference genome using next generation sequence and optical map data.</title>
        <authorList>
            <person name="Kawahara Y."/>
            <person name="de la Bastide M."/>
            <person name="Hamilton J.P."/>
            <person name="Kanamori H."/>
            <person name="McCombie W.R."/>
            <person name="Ouyang S."/>
            <person name="Schwartz D.C."/>
            <person name="Tanaka T."/>
            <person name="Wu J."/>
            <person name="Zhou S."/>
            <person name="Childs K.L."/>
            <person name="Davidson R.M."/>
            <person name="Lin H."/>
            <person name="Quesada-Ocampo L."/>
            <person name="Vaillancourt B."/>
            <person name="Sakai H."/>
            <person name="Lee S.S."/>
            <person name="Kim J."/>
            <person name="Numa H."/>
            <person name="Itoh T."/>
            <person name="Buell C.R."/>
            <person name="Matsumoto T."/>
        </authorList>
    </citation>
    <scope>GENOME REANNOTATION</scope>
    <source>
        <strain>cv. Nipponbare</strain>
    </source>
</reference>
<reference key="4">
    <citation type="journal article" date="2003" name="Science">
        <title>Collection, mapping, and annotation of over 28,000 cDNA clones from japonica rice.</title>
        <authorList>
            <consortium name="The rice full-length cDNA consortium"/>
        </authorList>
    </citation>
    <scope>NUCLEOTIDE SEQUENCE [LARGE SCALE MRNA]</scope>
    <source>
        <strain>cv. Nipponbare</strain>
    </source>
</reference>
<reference key="5">
    <citation type="journal article" date="2006" name="Plant Cell">
        <title>The serine/arginine-rich protein family in rice plays important roles in constitutive and alternative splicing of pre-mRNA.</title>
        <authorList>
            <person name="Isshiki M."/>
            <person name="Tsumoto A."/>
            <person name="Shimamoto K."/>
        </authorList>
    </citation>
    <scope>FUNCTION</scope>
    <scope>TISSUE SPECIFICITY</scope>
    <scope>GENE FAMILY</scope>
</reference>
<reference key="6">
    <citation type="journal article" date="2010" name="Plant Cell">
        <title>Implementing a rational and consistent nomenclature for serine/arginine-rich protein splicing factors (SR proteins) in plants.</title>
        <authorList>
            <person name="Barta A."/>
            <person name="Kalyna M."/>
            <person name="Reddy A.S."/>
        </authorList>
    </citation>
    <scope>GENE FAMILY</scope>
    <scope>NOMENCLATURE</scope>
</reference>
<proteinExistence type="evidence at transcript level"/>
<sequence length="200" mass="22797">MARVYVGNLDPRVTAREIEDEFRVFGVLRSVWVARKPPGFAFIDFDDRRDAEDAIRDLDGKNGWRVELSTKAGSGRGRDRSGGSDMKCYECGEPGHFARECRLRIGSGGLGSGRRRSRSRSRSPRYRGRSRSRSPRYRRSPSYGRSPRDRSPKRRSYSRSPPPARARSYSRSPPPPRERSYSRSPAQPANREESPYANNA</sequence>
<accession>Q6K9C3</accession>
<accession>A0A0P0VLM7</accession>